<dbReference type="EMBL" id="AL669840">
    <property type="protein sequence ID" value="CAI25700.1"/>
    <property type="molecule type" value="Genomic_DNA"/>
</dbReference>
<dbReference type="EMBL" id="AL845484">
    <property type="protein sequence ID" value="CAI25700.1"/>
    <property type="status" value="JOINED"/>
    <property type="molecule type" value="Genomic_DNA"/>
</dbReference>
<dbReference type="EMBL" id="AL669840">
    <property type="protein sequence ID" value="CAI25701.1"/>
    <property type="molecule type" value="Genomic_DNA"/>
</dbReference>
<dbReference type="EMBL" id="AL845484">
    <property type="protein sequence ID" value="CAI25701.1"/>
    <property type="status" value="JOINED"/>
    <property type="molecule type" value="Genomic_DNA"/>
</dbReference>
<dbReference type="EMBL" id="AL845484">
    <property type="protein sequence ID" value="CAI25223.1"/>
    <property type="molecule type" value="Genomic_DNA"/>
</dbReference>
<dbReference type="EMBL" id="AL669840">
    <property type="protein sequence ID" value="CAI25223.1"/>
    <property type="status" value="JOINED"/>
    <property type="molecule type" value="Genomic_DNA"/>
</dbReference>
<dbReference type="EMBL" id="AL845484">
    <property type="protein sequence ID" value="CAI25224.1"/>
    <property type="molecule type" value="Genomic_DNA"/>
</dbReference>
<dbReference type="EMBL" id="AL669840">
    <property type="protein sequence ID" value="CAI25224.1"/>
    <property type="status" value="JOINED"/>
    <property type="molecule type" value="Genomic_DNA"/>
</dbReference>
<dbReference type="EMBL" id="BC043080">
    <property type="protein sequence ID" value="AAH43080.1"/>
    <property type="status" value="ALT_INIT"/>
    <property type="molecule type" value="mRNA"/>
</dbReference>
<dbReference type="EMBL" id="AK129383">
    <property type="protein sequence ID" value="BAC98193.2"/>
    <property type="molecule type" value="Transcribed_RNA"/>
</dbReference>
<dbReference type="CCDS" id="CCDS48855.1">
    <molecule id="Q5SPL2-1"/>
</dbReference>
<dbReference type="RefSeq" id="NP_777277.2">
    <molecule id="Q5SPL2-1"/>
    <property type="nucleotide sequence ID" value="NM_174852.3"/>
</dbReference>
<dbReference type="BMRB" id="Q5SPL2"/>
<dbReference type="SMR" id="Q5SPL2"/>
<dbReference type="BioGRID" id="234499">
    <property type="interactions" value="4"/>
</dbReference>
<dbReference type="DIP" id="DIP-59633N"/>
<dbReference type="FunCoup" id="Q5SPL2">
    <property type="interactions" value="3509"/>
</dbReference>
<dbReference type="IntAct" id="Q5SPL2">
    <property type="interactions" value="1"/>
</dbReference>
<dbReference type="STRING" id="10090.ENSMUSP00000044990"/>
<dbReference type="GlyGen" id="Q5SPL2">
    <property type="glycosylation" value="5 sites, 1 O-linked glycan (4 sites)"/>
</dbReference>
<dbReference type="iPTMnet" id="Q5SPL2"/>
<dbReference type="PhosphoSitePlus" id="Q5SPL2"/>
<dbReference type="jPOST" id="Q5SPL2"/>
<dbReference type="PaxDb" id="10090-ENSMUSP00000044990"/>
<dbReference type="ProteomicsDB" id="301809">
    <molecule id="Q5SPL2-1"/>
</dbReference>
<dbReference type="ProteomicsDB" id="301810">
    <molecule id="Q5SPL2-2"/>
</dbReference>
<dbReference type="Pumba" id="Q5SPL2"/>
<dbReference type="Antibodypedia" id="14939">
    <property type="antibodies" value="82 antibodies from 19 providers"/>
</dbReference>
<dbReference type="DNASU" id="268448"/>
<dbReference type="Ensembl" id="ENSMUST00000049167.14">
    <molecule id="Q5SPL2-1"/>
    <property type="protein sequence ID" value="ENSMUSP00000044990.8"/>
    <property type="gene ID" value="ENSMUSG00000037791.16"/>
</dbReference>
<dbReference type="Ensembl" id="ENSMUST00000108360.8">
    <molecule id="Q5SPL2-2"/>
    <property type="protein sequence ID" value="ENSMUSP00000103997.2"/>
    <property type="gene ID" value="ENSMUSG00000037791.16"/>
</dbReference>
<dbReference type="GeneID" id="268448"/>
<dbReference type="KEGG" id="mmu:268448"/>
<dbReference type="UCSC" id="uc007kht.2">
    <molecule id="Q5SPL2-1"/>
    <property type="organism name" value="mouse"/>
</dbReference>
<dbReference type="AGR" id="MGI:1924057"/>
<dbReference type="CTD" id="57649"/>
<dbReference type="MGI" id="MGI:1924057">
    <property type="gene designation" value="Phf12"/>
</dbReference>
<dbReference type="VEuPathDB" id="HostDB:ENSMUSG00000037791"/>
<dbReference type="eggNOG" id="KOG4299">
    <property type="taxonomic scope" value="Eukaryota"/>
</dbReference>
<dbReference type="GeneTree" id="ENSGT00940000155713"/>
<dbReference type="HOGENOM" id="CLU_015009_0_0_1"/>
<dbReference type="InParanoid" id="Q5SPL2"/>
<dbReference type="OMA" id="CKVQARA"/>
<dbReference type="OrthoDB" id="1919692at2759"/>
<dbReference type="PhylomeDB" id="Q5SPL2"/>
<dbReference type="TreeFam" id="TF336193"/>
<dbReference type="BioGRID-ORCS" id="268448">
    <property type="hits" value="14 hits in 86 CRISPR screens"/>
</dbReference>
<dbReference type="ChiTaRS" id="Phf12">
    <property type="organism name" value="mouse"/>
</dbReference>
<dbReference type="PRO" id="PR:Q5SPL2"/>
<dbReference type="Proteomes" id="UP000000589">
    <property type="component" value="Chromosome 11"/>
</dbReference>
<dbReference type="RNAct" id="Q5SPL2">
    <property type="molecule type" value="protein"/>
</dbReference>
<dbReference type="Bgee" id="ENSMUSG00000037791">
    <property type="expression patterns" value="Expressed in undifferentiated genital tubercle and 255 other cell types or tissues"/>
</dbReference>
<dbReference type="ExpressionAtlas" id="Q5SPL2">
    <property type="expression patterns" value="baseline and differential"/>
</dbReference>
<dbReference type="GO" id="GO:0005634">
    <property type="term" value="C:nucleus"/>
    <property type="evidence" value="ECO:0000250"/>
    <property type="project" value="UniProtKB"/>
</dbReference>
<dbReference type="GO" id="GO:0070822">
    <property type="term" value="C:Sin3-type complex"/>
    <property type="evidence" value="ECO:0000266"/>
    <property type="project" value="MGI"/>
</dbReference>
<dbReference type="GO" id="GO:0017053">
    <property type="term" value="C:transcription repressor complex"/>
    <property type="evidence" value="ECO:0000250"/>
    <property type="project" value="UniProtKB"/>
</dbReference>
<dbReference type="GO" id="GO:0035091">
    <property type="term" value="F:phosphatidylinositol binding"/>
    <property type="evidence" value="ECO:0007669"/>
    <property type="project" value="Ensembl"/>
</dbReference>
<dbReference type="GO" id="GO:0003714">
    <property type="term" value="F:transcription corepressor activity"/>
    <property type="evidence" value="ECO:0000266"/>
    <property type="project" value="MGI"/>
</dbReference>
<dbReference type="GO" id="GO:0001222">
    <property type="term" value="F:transcription corepressor binding"/>
    <property type="evidence" value="ECO:0000353"/>
    <property type="project" value="MGI"/>
</dbReference>
<dbReference type="GO" id="GO:0008270">
    <property type="term" value="F:zinc ion binding"/>
    <property type="evidence" value="ECO:0007669"/>
    <property type="project" value="UniProtKB-KW"/>
</dbReference>
<dbReference type="GO" id="GO:0045892">
    <property type="term" value="P:negative regulation of DNA-templated transcription"/>
    <property type="evidence" value="ECO:0000250"/>
    <property type="project" value="UniProtKB"/>
</dbReference>
<dbReference type="GO" id="GO:0000122">
    <property type="term" value="P:negative regulation of transcription by RNA polymerase II"/>
    <property type="evidence" value="ECO:0000266"/>
    <property type="project" value="MGI"/>
</dbReference>
<dbReference type="CDD" id="cd22703">
    <property type="entry name" value="FHA_PHF12"/>
    <property type="match status" value="1"/>
</dbReference>
<dbReference type="CDD" id="cd15533">
    <property type="entry name" value="PHD1_PHF12"/>
    <property type="match status" value="1"/>
</dbReference>
<dbReference type="CDD" id="cd15534">
    <property type="entry name" value="PHD2_PHF12_Rco1"/>
    <property type="match status" value="1"/>
</dbReference>
<dbReference type="FunFam" id="3.30.40.10:FF:000154">
    <property type="entry name" value="PHD finger protein 12"/>
    <property type="match status" value="1"/>
</dbReference>
<dbReference type="FunFam" id="3.30.40.10:FF:000164">
    <property type="entry name" value="PHD finger protein 12"/>
    <property type="match status" value="1"/>
</dbReference>
<dbReference type="Gene3D" id="6.10.20.60">
    <property type="entry name" value="PHD finger protein 12"/>
    <property type="match status" value="1"/>
</dbReference>
<dbReference type="Gene3D" id="3.30.40.10">
    <property type="entry name" value="Zinc/RING finger domain, C3HC4 (zinc finger)"/>
    <property type="match status" value="2"/>
</dbReference>
<dbReference type="InterPro" id="IPR000253">
    <property type="entry name" value="FHA_dom"/>
</dbReference>
<dbReference type="InterPro" id="IPR042163">
    <property type="entry name" value="PHF12"/>
</dbReference>
<dbReference type="InterPro" id="IPR031966">
    <property type="entry name" value="PHF12_MRG-bd"/>
</dbReference>
<dbReference type="InterPro" id="IPR038098">
    <property type="entry name" value="PHF12_MRG-bd_sf"/>
</dbReference>
<dbReference type="InterPro" id="IPR008984">
    <property type="entry name" value="SMAD_FHA_dom_sf"/>
</dbReference>
<dbReference type="InterPro" id="IPR019786">
    <property type="entry name" value="Zinc_finger_PHD-type_CS"/>
</dbReference>
<dbReference type="InterPro" id="IPR011011">
    <property type="entry name" value="Znf_FYVE_PHD"/>
</dbReference>
<dbReference type="InterPro" id="IPR001965">
    <property type="entry name" value="Znf_PHD"/>
</dbReference>
<dbReference type="InterPro" id="IPR019787">
    <property type="entry name" value="Znf_PHD-finger"/>
</dbReference>
<dbReference type="InterPro" id="IPR013083">
    <property type="entry name" value="Znf_RING/FYVE/PHD"/>
</dbReference>
<dbReference type="PANTHER" id="PTHR46309">
    <property type="entry name" value="PHD FINGER PROTEIN 12"/>
    <property type="match status" value="1"/>
</dbReference>
<dbReference type="PANTHER" id="PTHR46309:SF1">
    <property type="entry name" value="PHD FINGER PROTEIN 12"/>
    <property type="match status" value="1"/>
</dbReference>
<dbReference type="Pfam" id="PF00628">
    <property type="entry name" value="PHD"/>
    <property type="match status" value="2"/>
</dbReference>
<dbReference type="Pfam" id="PF16737">
    <property type="entry name" value="PHF12_MRG_bd"/>
    <property type="match status" value="1"/>
</dbReference>
<dbReference type="SMART" id="SM00249">
    <property type="entry name" value="PHD"/>
    <property type="match status" value="2"/>
</dbReference>
<dbReference type="SUPFAM" id="SSF57903">
    <property type="entry name" value="FYVE/PHD zinc finger"/>
    <property type="match status" value="2"/>
</dbReference>
<dbReference type="SUPFAM" id="SSF49879">
    <property type="entry name" value="SMAD/FHA domain"/>
    <property type="match status" value="1"/>
</dbReference>
<dbReference type="PROSITE" id="PS50006">
    <property type="entry name" value="FHA_DOMAIN"/>
    <property type="match status" value="1"/>
</dbReference>
<dbReference type="PROSITE" id="PS01359">
    <property type="entry name" value="ZF_PHD_1"/>
    <property type="match status" value="1"/>
</dbReference>
<dbReference type="PROSITE" id="PS50016">
    <property type="entry name" value="ZF_PHD_2"/>
    <property type="match status" value="2"/>
</dbReference>
<accession>Q5SPL2</accession>
<accession>Q5SPL3</accession>
<accession>Q6ZPN8</accession>
<accession>Q80W50</accession>
<name>PHF12_MOUSE</name>
<evidence type="ECO:0000250" key="1">
    <source>
        <dbReference type="UniProtKB" id="Q96QT6"/>
    </source>
</evidence>
<evidence type="ECO:0000255" key="2">
    <source>
        <dbReference type="PROSITE-ProRule" id="PRU00086"/>
    </source>
</evidence>
<evidence type="ECO:0000255" key="3">
    <source>
        <dbReference type="PROSITE-ProRule" id="PRU00146"/>
    </source>
</evidence>
<evidence type="ECO:0000256" key="4">
    <source>
        <dbReference type="SAM" id="MobiDB-lite"/>
    </source>
</evidence>
<evidence type="ECO:0000269" key="5">
    <source>
    </source>
</evidence>
<evidence type="ECO:0000269" key="6">
    <source>
    </source>
</evidence>
<evidence type="ECO:0000303" key="7">
    <source>
    </source>
</evidence>
<evidence type="ECO:0000305" key="8"/>
<evidence type="ECO:0000312" key="9">
    <source>
        <dbReference type="EMBL" id="AAH43080.1"/>
    </source>
</evidence>
<evidence type="ECO:0000312" key="10">
    <source>
        <dbReference type="EMBL" id="BAC98193.2"/>
    </source>
</evidence>
<evidence type="ECO:0000312" key="11">
    <source>
        <dbReference type="EMBL" id="CAI25224.1"/>
    </source>
</evidence>
<evidence type="ECO:0007744" key="12">
    <source>
    </source>
</evidence>
<proteinExistence type="evidence at protein level"/>
<reference key="1">
    <citation type="journal article" date="2009" name="PLoS Biol.">
        <title>Lineage-specific biology revealed by a finished genome assembly of the mouse.</title>
        <authorList>
            <person name="Church D.M."/>
            <person name="Goodstadt L."/>
            <person name="Hillier L.W."/>
            <person name="Zody M.C."/>
            <person name="Goldstein S."/>
            <person name="She X."/>
            <person name="Bult C.J."/>
            <person name="Agarwala R."/>
            <person name="Cherry J.L."/>
            <person name="DiCuccio M."/>
            <person name="Hlavina W."/>
            <person name="Kapustin Y."/>
            <person name="Meric P."/>
            <person name="Maglott D."/>
            <person name="Birtle Z."/>
            <person name="Marques A.C."/>
            <person name="Graves T."/>
            <person name="Zhou S."/>
            <person name="Teague B."/>
            <person name="Potamousis K."/>
            <person name="Churas C."/>
            <person name="Place M."/>
            <person name="Herschleb J."/>
            <person name="Runnheim R."/>
            <person name="Forrest D."/>
            <person name="Amos-Landgraf J."/>
            <person name="Schwartz D.C."/>
            <person name="Cheng Z."/>
            <person name="Lindblad-Toh K."/>
            <person name="Eichler E.E."/>
            <person name="Ponting C.P."/>
        </authorList>
    </citation>
    <scope>NUCLEOTIDE SEQUENCE [LARGE SCALE GENOMIC DNA]</scope>
    <source>
        <strain>C57BL/6J</strain>
    </source>
</reference>
<reference evidence="8 9" key="2">
    <citation type="journal article" date="2004" name="Genome Res.">
        <title>The status, quality, and expansion of the NIH full-length cDNA project: the Mammalian Gene Collection (MGC).</title>
        <authorList>
            <consortium name="The MGC Project Team"/>
        </authorList>
    </citation>
    <scope>NUCLEOTIDE SEQUENCE [LARGE SCALE MRNA] (ISOFORM 1)</scope>
    <source>
        <strain evidence="9">C57BL/6J</strain>
        <tissue evidence="9">Brain</tissue>
    </source>
</reference>
<reference evidence="8 10" key="3">
    <citation type="journal article" date="2003" name="DNA Res.">
        <title>Prediction of the coding sequences of mouse homologues of KIAA gene: III. The complete nucleotide sequences of 500 mouse KIAA-homologous cDNAs identified by screening of terminal sequences of cDNA clones randomly sampled from size-fractionated libraries.</title>
        <authorList>
            <person name="Okazaki N."/>
            <person name="Kikuno R."/>
            <person name="Ohara R."/>
            <person name="Inamoto S."/>
            <person name="Koseki H."/>
            <person name="Hiraoka S."/>
            <person name="Saga Y."/>
            <person name="Nagase T."/>
            <person name="Ohara O."/>
            <person name="Koga H."/>
        </authorList>
    </citation>
    <scope>NUCLEOTIDE SEQUENCE [LARGE SCALE MRNA] OF 120-1003 (ISOFORM 1)</scope>
    <source>
        <tissue evidence="10">Embryonic tail</tissue>
    </source>
</reference>
<reference evidence="8 11" key="4">
    <citation type="submission" date="2003-12" db="EMBL/GenBank/DDBJ databases">
        <authorList>
            <person name="Okazaki N."/>
            <person name="Kikuno R."/>
            <person name="Nagase T."/>
            <person name="Ohara O."/>
            <person name="Koga H."/>
        </authorList>
    </citation>
    <scope>SEQUENCE REVISION</scope>
</reference>
<reference evidence="8" key="5">
    <citation type="journal article" date="2001" name="Mol. Cell. Biol.">
        <title>Pf1, a novel PHD zinc finger protein that links the TLE corepressor to the mSin3A-histone deacetylase complex.</title>
        <authorList>
            <person name="Yochum G.S."/>
            <person name="Ayer D.E."/>
        </authorList>
    </citation>
    <scope>TISSUE SPECIFICITY</scope>
    <scope>DEVELOPMENTAL STAGE</scope>
</reference>
<reference key="6">
    <citation type="journal article" date="2007" name="Proc. Natl. Acad. Sci. U.S.A.">
        <title>Large-scale phosphorylation analysis of mouse liver.</title>
        <authorList>
            <person name="Villen J."/>
            <person name="Beausoleil S.A."/>
            <person name="Gerber S.A."/>
            <person name="Gygi S.P."/>
        </authorList>
    </citation>
    <scope>IDENTIFICATION BY MASS SPECTROMETRY [LARGE SCALE ANALYSIS]</scope>
    <source>
        <tissue>Liver</tissue>
    </source>
</reference>
<reference key="7">
    <citation type="journal article" date="2010" name="Cell">
        <title>A tissue-specific atlas of mouse protein phosphorylation and expression.</title>
        <authorList>
            <person name="Huttlin E.L."/>
            <person name="Jedrychowski M.P."/>
            <person name="Elias J.E."/>
            <person name="Goswami T."/>
            <person name="Rad R."/>
            <person name="Beausoleil S.A."/>
            <person name="Villen J."/>
            <person name="Haas W."/>
            <person name="Sowa M.E."/>
            <person name="Gygi S.P."/>
        </authorList>
    </citation>
    <scope>PHOSPHORYLATION [LARGE SCALE ANALYSIS] AT SER-131 AND THR-670</scope>
    <scope>IDENTIFICATION BY MASS SPECTROMETRY [LARGE SCALE ANALYSIS]</scope>
    <source>
        <tissue>Brain</tissue>
        <tissue>Kidney</tissue>
        <tissue>Lung</tissue>
        <tissue>Pancreas</tissue>
        <tissue>Spleen</tissue>
        <tissue>Testis</tissue>
    </source>
</reference>
<reference key="8">
    <citation type="journal article" date="2017" name="Mol. Cell. Biol.">
        <title>The Chromatin-Associated Phf12 Protein Maintains Nucleolar Integrity and Prevents Premature Cellular Senescence.</title>
        <authorList>
            <person name="Graveline R."/>
            <person name="Marcinkiewicz K."/>
            <person name="Choi S."/>
            <person name="Paquet M."/>
            <person name="Wurst W."/>
            <person name="Floss T."/>
            <person name="David G."/>
        </authorList>
    </citation>
    <scope>FUNCTION</scope>
    <scope>DISRUPTION PHENOTYPE</scope>
</reference>
<organism>
    <name type="scientific">Mus musculus</name>
    <name type="common">Mouse</name>
    <dbReference type="NCBI Taxonomy" id="10090"/>
    <lineage>
        <taxon>Eukaryota</taxon>
        <taxon>Metazoa</taxon>
        <taxon>Chordata</taxon>
        <taxon>Craniata</taxon>
        <taxon>Vertebrata</taxon>
        <taxon>Euteleostomi</taxon>
        <taxon>Mammalia</taxon>
        <taxon>Eutheria</taxon>
        <taxon>Euarchontoglires</taxon>
        <taxon>Glires</taxon>
        <taxon>Rodentia</taxon>
        <taxon>Myomorpha</taxon>
        <taxon>Muroidea</taxon>
        <taxon>Muridae</taxon>
        <taxon>Murinae</taxon>
        <taxon>Mus</taxon>
        <taxon>Mus</taxon>
    </lineage>
</organism>
<comment type="function">
    <text evidence="1 6">Transcriptional repressor acting as key scaffolding subunit of SIN3 complexes which contributes to complex assembly by contacting each core subunit domain, stabilizes the complex and constitutes the substrate receptor by recruiting the H3 histone tail. SIN3 complexes are composed of a SIN3 scaffold subunit, one catalytic core (HDAC1 or HDAC2) and 2 chromatin targeting modules. SIN3B complex represses transcription and counteracts the histone acetyltransferase activity of EP300 through the recognition H3K27ac marks by PHF12 and the activity of the histone deacetylase HDAC2. SIN3B complex is recruited downstream of the constitutively active genes transcriptional start sites through interaction with histones and mitigates histone acetylation and RNA polymerase II progression within transcribed regions contributing to the regulation of transcription. May also repress transcription in a SIN3A-independent manner through recruitment of functional TLE5 complexes to DNA (By similarity). May also play a role in ribosomal biogenesis (PubMed:27956701).</text>
</comment>
<comment type="subunit">
    <text evidence="1">Component of SIN3 complexes. Interacts with SIN3A in a complex composed of HDAC1, SAP30 and SIN3A. Component of the SIN3B complex, which includes SIN3B, HDAC2 or HDAC1, PHF12 and MORF4L1; interacts directly with all subunits. Interacts with TLE5.</text>
</comment>
<comment type="interaction">
    <interactant intactId="EBI-15963335">
        <id>Q5SPL2</id>
    </interactant>
    <interactant intactId="EBI-10288852">
        <id>Q9UBU8-2</id>
        <label>MORF4L1</label>
    </interactant>
    <organismsDiffer>true</organismsDiffer>
    <experiments>2</experiments>
</comment>
<comment type="subcellular location">
    <subcellularLocation>
        <location evidence="8">Nucleus</location>
    </subcellularLocation>
</comment>
<comment type="alternative products">
    <event type="alternative splicing"/>
    <isoform>
        <id>Q5SPL2-1</id>
        <name>1</name>
        <sequence type="displayed"/>
    </isoform>
    <isoform>
        <id>Q5SPL2-2</id>
        <name>2</name>
        <sequence type="described" ref="VSP_051773 VSP_051774"/>
    </isoform>
</comment>
<comment type="tissue specificity">
    <text evidence="5">Expressed mainly in heart, brain, lung, liver and testis.</text>
</comment>
<comment type="developmental stage">
    <text evidence="5">Expression is low in day 7 embryos, peaks at day 11 and declines through to day 17.</text>
</comment>
<comment type="domain">
    <text evidence="1">In the context of the SIN3B complex, the PHD-type 1 Zinc finger delivers the H3 substrate to the HDAC active site. The atypical PHD-type 2 Zinc finger has a structural role raher than a substrate recruitment role, wedged betweem SIN3B amd the HDAC and stabilizing the SIN3B:HDAC2 interaction. Also interacts with SIN3B through the SIN3 interacting domain 2 (SID2). Interacts with MORF4L1 through PHD-type 1 in a SIN3 interacting domain 1 (SID1)-dependent manner.</text>
</comment>
<comment type="domain">
    <text evidence="1">The polybasic region (PBR) is responsive to the binding to phosphoinositides (PtdInsPs).</text>
</comment>
<comment type="disruption phenotype">
    <text evidence="6">Mutant embryos die at mid- to late gestation with diverse developmental defects, including edema and internal hemorrhage. They show a global growth retardation whith 14.5 dpc embryos in a comparable size to 11.5 dpc wild-type embryos. They also present impaired development of the skeleton, the assocaited skeletal muscle and the brain.</text>
</comment>
<comment type="sequence caution" evidence="8">
    <conflict type="erroneous initiation">
        <sequence resource="EMBL-CDS" id="AAH43080"/>
    </conflict>
    <text>Truncated N-terminus.</text>
</comment>
<protein>
    <recommendedName>
        <fullName>PHD finger protein 12</fullName>
    </recommendedName>
    <alternativeName>
        <fullName>PHD factor 1</fullName>
        <shortName evidence="7">Pf1</shortName>
    </alternativeName>
</protein>
<gene>
    <name evidence="11" type="primary">Phf12</name>
    <name type="synonym">Kiaa1523</name>
</gene>
<sequence length="1003" mass="109509">MWEKMETKTIVYDLDTSGGLMEQIQALLAPPKTDEAEKRSRKPEKESRRSGRATNHDSCDSCKEGGDLLCCDHCPAAFHLQCCNPPLSEEMLPPGEWMCHRCTVRRKKREQKKELGHVNGLVDKSSKRTTSPSSDTDLLDRPASKTELKAIAHARILERRASRPGTPTSNASTETPTSEHNDVDEDIVDVDEEPVAAEPDYVQPQLRRPFELLIAAAMERNPTQFQLPNELTCTTALPGSSKRRRKEETTGKNVKRTQHELDHNGLVPLPVKVCFTCNRSCRVAPLIQCDYCPLLFHMDCLEPPLTAMPLGRWMCPNHIEHVVLNQKNLTLSNRCQVFDRFQDTISQHVVKVDFLNRIHKKHPPNRRVLQSVKRRSLKVPDAIKSQYQFPPPLIAPAAIRDGELICSGVPEESQTHLLNSEHLATQAEQQEWLCSVVALQCSILKHLSAKQMPSPWDSEQTEKADIKPVIVTDSSITTSLQTADKAPLPSHYPLSCPSAVSTQNSLGCSPPHQPPTLEDISCSSCVEKSKKAPCGTANGPVNTEIKANGPHLYSSPTDSTDPRRLPGANTPLPGLTHRQGWPRPLTPPSAGGLQNHVGIIVKTENATGPSSCPQRSLVPVPSLPPSIPSSCASIENTSTLHRKTVQSQIGPSSTESRPLGSPPNATRVLTPPQAAGDSILATGANQRFCSPAPSSDGKVSPGTLSIGSALTVPSFPANSTAMVDLTNSLRAFMDVNGEIEINMLDEKLIKFLALQRVHQLFPSRVQASPGNVGTHPLASGGHHPEVQRKEVQARAVFCPLLGLGGAVNMCYRTLYIGTGADMDVCLTNYGHCNYVSGKHACIFYDENTKHYELLNYSEHGTTVDNVLYSCDFSEKTPPTPPSSIVAKVQSVIRRRRHQKQDEEPSEEAAMMSSQAQGPQRRPCNCKASSSSLIGGSGAGWEGTALLHHGSYIKLGCLQFVFSITEFATKQPKGDASLLQDGVLAEKLSLKPHQGPVLRSNSVP</sequence>
<keyword id="KW-0025">Alternative splicing</keyword>
<keyword id="KW-1017">Isopeptide bond</keyword>
<keyword id="KW-0479">Metal-binding</keyword>
<keyword id="KW-0539">Nucleus</keyword>
<keyword id="KW-0597">Phosphoprotein</keyword>
<keyword id="KW-1185">Reference proteome</keyword>
<keyword id="KW-0677">Repeat</keyword>
<keyword id="KW-0678">Repressor</keyword>
<keyword id="KW-0804">Transcription</keyword>
<keyword id="KW-0805">Transcription regulation</keyword>
<keyword id="KW-0832">Ubl conjugation</keyword>
<keyword id="KW-0862">Zinc</keyword>
<keyword id="KW-0863">Zinc-finger</keyword>
<feature type="chain" id="PRO_0000059303" description="PHD finger protein 12">
    <location>
        <begin position="1"/>
        <end position="1003"/>
    </location>
</feature>
<feature type="domain" description="FHA" evidence="2">
    <location>
        <begin position="814"/>
        <end position="868"/>
    </location>
</feature>
<feature type="zinc finger region" description="PHD-type 1" evidence="3">
    <location>
        <begin position="56"/>
        <end position="105"/>
    </location>
</feature>
<feature type="zinc finger region" description="PHD-type 2; atypical" evidence="3">
    <location>
        <begin position="271"/>
        <end position="321"/>
    </location>
</feature>
<feature type="region of interest" description="Disordered" evidence="4">
    <location>
        <begin position="29"/>
        <end position="59"/>
    </location>
</feature>
<feature type="region of interest" description="Disordered" evidence="4">
    <location>
        <begin position="110"/>
        <end position="183"/>
    </location>
</feature>
<feature type="region of interest" description="SIN3 interacting domain 1" evidence="1">
    <location>
        <begin position="202"/>
        <end position="241"/>
    </location>
</feature>
<feature type="region of interest" description="Disordered" evidence="4">
    <location>
        <begin position="234"/>
        <end position="255"/>
    </location>
</feature>
<feature type="region of interest" description="SIN3 interacting domain 2" evidence="1">
    <location>
        <begin position="328"/>
        <end position="364"/>
    </location>
</feature>
<feature type="region of interest" description="Disordered" evidence="4">
    <location>
        <begin position="531"/>
        <end position="583"/>
    </location>
</feature>
<feature type="region of interest" description="Disordered" evidence="4">
    <location>
        <begin position="641"/>
        <end position="671"/>
    </location>
</feature>
<feature type="region of interest" description="Disordered" evidence="4">
    <location>
        <begin position="894"/>
        <end position="922"/>
    </location>
</feature>
<feature type="compositionally biased region" description="Basic and acidic residues" evidence="4">
    <location>
        <begin position="32"/>
        <end position="59"/>
    </location>
</feature>
<feature type="compositionally biased region" description="Basic and acidic residues" evidence="4">
    <location>
        <begin position="138"/>
        <end position="161"/>
    </location>
</feature>
<feature type="compositionally biased region" description="Polar residues" evidence="4">
    <location>
        <begin position="165"/>
        <end position="178"/>
    </location>
</feature>
<feature type="compositionally biased region" description="Polar residues" evidence="4">
    <location>
        <begin position="641"/>
        <end position="656"/>
    </location>
</feature>
<feature type="compositionally biased region" description="Low complexity" evidence="4">
    <location>
        <begin position="907"/>
        <end position="916"/>
    </location>
</feature>
<feature type="binding site" evidence="1">
    <location>
        <position position="59"/>
    </location>
    <ligand>
        <name>Zn(2+)</name>
        <dbReference type="ChEBI" id="CHEBI:29105"/>
        <label>1</label>
    </ligand>
</feature>
<feature type="binding site" evidence="1">
    <location>
        <position position="61"/>
    </location>
    <ligand>
        <name>Zn(2+)</name>
        <dbReference type="ChEBI" id="CHEBI:29105"/>
        <label>1</label>
    </ligand>
</feature>
<feature type="binding site" evidence="1">
    <location>
        <position position="62"/>
    </location>
    <ligand>
        <name>Zn(2+)</name>
        <dbReference type="ChEBI" id="CHEBI:29105"/>
        <label>1</label>
    </ligand>
</feature>
<feature type="binding site" evidence="1">
    <location>
        <position position="79"/>
    </location>
    <ligand>
        <name>Zn(2+)</name>
        <dbReference type="ChEBI" id="CHEBI:29105"/>
        <label>1</label>
    </ligand>
</feature>
<feature type="binding site" evidence="1">
    <location>
        <position position="82"/>
    </location>
    <ligand>
        <name>Zn(2+)</name>
        <dbReference type="ChEBI" id="CHEBI:29105"/>
        <label>1</label>
    </ligand>
</feature>
<feature type="binding site" evidence="1">
    <location>
        <position position="274"/>
    </location>
    <ligand>
        <name>Zn(2+)</name>
        <dbReference type="ChEBI" id="CHEBI:29105"/>
        <label>3</label>
    </ligand>
</feature>
<feature type="binding site" evidence="1">
    <location>
        <position position="277"/>
    </location>
    <ligand>
        <name>Zn(2+)</name>
        <dbReference type="ChEBI" id="CHEBI:29105"/>
        <label>3</label>
    </ligand>
</feature>
<feature type="binding site" evidence="1">
    <location>
        <position position="289"/>
    </location>
    <ligand>
        <name>Zn(2+)</name>
        <dbReference type="ChEBI" id="CHEBI:29105"/>
        <label>2</label>
    </ligand>
</feature>
<feature type="binding site" evidence="1">
    <location>
        <position position="292"/>
    </location>
    <ligand>
        <name>Zn(2+)</name>
        <dbReference type="ChEBI" id="CHEBI:29105"/>
        <label>2</label>
    </ligand>
</feature>
<feature type="binding site" evidence="1">
    <location>
        <position position="297"/>
    </location>
    <ligand>
        <name>Zn(2+)</name>
        <dbReference type="ChEBI" id="CHEBI:29105"/>
        <label>3</label>
    </ligand>
</feature>
<feature type="binding site" evidence="1">
    <location>
        <position position="300"/>
    </location>
    <ligand>
        <name>Zn(2+)</name>
        <dbReference type="ChEBI" id="CHEBI:29105"/>
        <label>3</label>
    </ligand>
</feature>
<feature type="binding site" evidence="1">
    <location>
        <position position="315"/>
    </location>
    <ligand>
        <name>Zn(2+)</name>
        <dbReference type="ChEBI" id="CHEBI:29105"/>
        <label>2</label>
    </ligand>
</feature>
<feature type="binding site" evidence="1">
    <location>
        <position position="318"/>
    </location>
    <ligand>
        <name>Zn(2+)</name>
        <dbReference type="ChEBI" id="CHEBI:29105"/>
        <label>2</label>
    </ligand>
</feature>
<feature type="modified residue" description="Phosphoserine" evidence="12">
    <location>
        <position position="131"/>
    </location>
</feature>
<feature type="modified residue" description="Phosphoserine" evidence="1">
    <location>
        <position position="134"/>
    </location>
</feature>
<feature type="modified residue" description="Phosphoserine" evidence="1">
    <location>
        <position position="555"/>
    </location>
</feature>
<feature type="modified residue" description="Phosphothreonine" evidence="1">
    <location>
        <position position="557"/>
    </location>
</feature>
<feature type="modified residue" description="Phosphothreonine" evidence="1">
    <location>
        <position position="570"/>
    </location>
</feature>
<feature type="modified residue" description="Phosphothreonine" evidence="12">
    <location>
        <position position="670"/>
    </location>
</feature>
<feature type="cross-link" description="Glycyl lysine isopeptide (Lys-Gly) (interchain with G-Cter in SUMO2)" evidence="1">
    <location>
        <position position="467"/>
    </location>
</feature>
<feature type="cross-link" description="Glycyl lysine isopeptide (Lys-Gly) (interchain with G-Cter in SUMO2)" evidence="1">
    <location>
        <position position="899"/>
    </location>
</feature>
<feature type="cross-link" description="Glycyl lysine isopeptide (Lys-Gly) (interchain with G-Cter in SUMO2)" evidence="1">
    <location>
        <position position="972"/>
    </location>
</feature>
<feature type="cross-link" description="Glycyl lysine isopeptide (Lys-Gly) (interchain with G-Cter in SUMO2)" evidence="1">
    <location>
        <position position="986"/>
    </location>
</feature>
<feature type="cross-link" description="Glycyl lysine isopeptide (Lys-Gly) (interchain with G-Cter in SUMO2)" evidence="1">
    <location>
        <position position="990"/>
    </location>
</feature>
<feature type="splice variant" id="VSP_051773" description="In isoform 2." evidence="8">
    <original>IEINMLDEKLIKFLALQRVHQLFPSRVQASPGNVGTHPLASGGHHPEVQR</original>
    <variation>STSAFPFPGPSFTGQCWDTSAGFWRAPPRRCARVHMPATTPSALLSDVCE</variation>
    <location>
        <begin position="739"/>
        <end position="788"/>
    </location>
</feature>
<feature type="splice variant" id="VSP_051774" description="In isoform 2." evidence="8">
    <location>
        <begin position="789"/>
        <end position="1003"/>
    </location>
</feature>